<gene>
    <name evidence="1" type="primary">fusA</name>
    <name type="ordered locus">CJJ81176_0513</name>
</gene>
<evidence type="ECO:0000255" key="1">
    <source>
        <dbReference type="HAMAP-Rule" id="MF_00054"/>
    </source>
</evidence>
<comment type="function">
    <text evidence="1">Catalyzes the GTP-dependent ribosomal translocation step during translation elongation. During this step, the ribosome changes from the pre-translocational (PRE) to the post-translocational (POST) state as the newly formed A-site-bound peptidyl-tRNA and P-site-bound deacylated tRNA move to the P and E sites, respectively. Catalyzes the coordinated movement of the two tRNA molecules, the mRNA and conformational changes in the ribosome.</text>
</comment>
<comment type="subcellular location">
    <subcellularLocation>
        <location evidence="1">Cytoplasm</location>
    </subcellularLocation>
</comment>
<comment type="similarity">
    <text evidence="1">Belongs to the TRAFAC class translation factor GTPase superfamily. Classic translation factor GTPase family. EF-G/EF-2 subfamily.</text>
</comment>
<name>EFG_CAMJJ</name>
<sequence length="691" mass="76745">MSRSTPLKKVRNIGIAAHIDAGKTTTSERILFFTGMSHKIGEVHDGAATMDWMEQEKERGITITSAATTCFWKDHQINLIDTPGHVDFTIEVERSMRVLDGAVAVFCSVGGVQPQSETVWRQANKYGVPRIVFVNKMDRIGANFYNVEDQIRNRLKANPVPLQIPIGAEDNFKGVIDLVTMKALVWEDDTKPTDYVEKEIPAELKEKAEEYRTKMIEAVSETSDELMEKYLGGEELSLEEIKTGIKAGCLSLSIVPMLCGTAFKNKGVQPLLDAVVAYLPAPDEVPNIKGEYEDGTEVSVKSTDDGEFAGLAFKIMTDPFVGQLTFVRVYRGCLESGSYAYNSTKDKKERIGRLLKMHSNKREEIKVLYAGEIGAVVGLKDTLTGDTLASEKDKVILERMDFPDPVISVAVEPKTKADQEKMSIALNKLAQEDPSFRVSTDEESGQTIISGMGELHLEIIVDRMLREFKVEAEVGQPQVAYRETIRKTVEQEYKYAKQSGGRGQYGHVFLRLEPLEPGSGYEFVNDIKGGVIPKEYIPAVDKGVQEALQNGVLAGYPVEDVKVTVYDGSYHEVDSSEMAFKLAASMGFKEGARKAGAVILEPMMKVEVETPEDYMGDVIGDLNKRRGQVNSMDERGGNKIITAFCPLAEMFGYSTDLRSQTQGRATYSMEFDHYDEVPKNVADEIIKKRNG</sequence>
<reference key="1">
    <citation type="submission" date="2006-12" db="EMBL/GenBank/DDBJ databases">
        <authorList>
            <person name="Fouts D.E."/>
            <person name="Nelson K.E."/>
            <person name="Sebastian Y."/>
        </authorList>
    </citation>
    <scope>NUCLEOTIDE SEQUENCE [LARGE SCALE GENOMIC DNA]</scope>
    <source>
        <strain>81-176</strain>
    </source>
</reference>
<keyword id="KW-0963">Cytoplasm</keyword>
<keyword id="KW-0251">Elongation factor</keyword>
<keyword id="KW-0342">GTP-binding</keyword>
<keyword id="KW-0547">Nucleotide-binding</keyword>
<keyword id="KW-0648">Protein biosynthesis</keyword>
<proteinExistence type="inferred from homology"/>
<feature type="chain" id="PRO_1000008813" description="Elongation factor G">
    <location>
        <begin position="1"/>
        <end position="691"/>
    </location>
</feature>
<feature type="domain" description="tr-type G">
    <location>
        <begin position="8"/>
        <end position="283"/>
    </location>
</feature>
<feature type="binding site" evidence="1">
    <location>
        <begin position="17"/>
        <end position="24"/>
    </location>
    <ligand>
        <name>GTP</name>
        <dbReference type="ChEBI" id="CHEBI:37565"/>
    </ligand>
</feature>
<feature type="binding site" evidence="1">
    <location>
        <begin position="81"/>
        <end position="85"/>
    </location>
    <ligand>
        <name>GTP</name>
        <dbReference type="ChEBI" id="CHEBI:37565"/>
    </ligand>
</feature>
<feature type="binding site" evidence="1">
    <location>
        <begin position="135"/>
        <end position="138"/>
    </location>
    <ligand>
        <name>GTP</name>
        <dbReference type="ChEBI" id="CHEBI:37565"/>
    </ligand>
</feature>
<accession>A1VYJ8</accession>
<dbReference type="EMBL" id="CP000538">
    <property type="protein sequence ID" value="EAQ73060.1"/>
    <property type="molecule type" value="Genomic_DNA"/>
</dbReference>
<dbReference type="RefSeq" id="WP_002868787.1">
    <property type="nucleotide sequence ID" value="NC_008787.1"/>
</dbReference>
<dbReference type="SMR" id="A1VYJ8"/>
<dbReference type="KEGG" id="cjj:CJJ81176_0513"/>
<dbReference type="eggNOG" id="COG0480">
    <property type="taxonomic scope" value="Bacteria"/>
</dbReference>
<dbReference type="HOGENOM" id="CLU_002794_4_1_7"/>
<dbReference type="Proteomes" id="UP000000646">
    <property type="component" value="Chromosome"/>
</dbReference>
<dbReference type="GO" id="GO:0005737">
    <property type="term" value="C:cytoplasm"/>
    <property type="evidence" value="ECO:0007669"/>
    <property type="project" value="UniProtKB-SubCell"/>
</dbReference>
<dbReference type="GO" id="GO:0005525">
    <property type="term" value="F:GTP binding"/>
    <property type="evidence" value="ECO:0007669"/>
    <property type="project" value="UniProtKB-UniRule"/>
</dbReference>
<dbReference type="GO" id="GO:0003924">
    <property type="term" value="F:GTPase activity"/>
    <property type="evidence" value="ECO:0007669"/>
    <property type="project" value="InterPro"/>
</dbReference>
<dbReference type="GO" id="GO:0003746">
    <property type="term" value="F:translation elongation factor activity"/>
    <property type="evidence" value="ECO:0007669"/>
    <property type="project" value="UniProtKB-UniRule"/>
</dbReference>
<dbReference type="GO" id="GO:0032790">
    <property type="term" value="P:ribosome disassembly"/>
    <property type="evidence" value="ECO:0007669"/>
    <property type="project" value="TreeGrafter"/>
</dbReference>
<dbReference type="CDD" id="cd01886">
    <property type="entry name" value="EF-G"/>
    <property type="match status" value="1"/>
</dbReference>
<dbReference type="CDD" id="cd16262">
    <property type="entry name" value="EFG_III"/>
    <property type="match status" value="1"/>
</dbReference>
<dbReference type="CDD" id="cd01434">
    <property type="entry name" value="EFG_mtEFG1_IV"/>
    <property type="match status" value="1"/>
</dbReference>
<dbReference type="CDD" id="cd03713">
    <property type="entry name" value="EFG_mtEFG_C"/>
    <property type="match status" value="1"/>
</dbReference>
<dbReference type="CDD" id="cd04088">
    <property type="entry name" value="EFG_mtEFG_II"/>
    <property type="match status" value="1"/>
</dbReference>
<dbReference type="FunFam" id="2.40.30.10:FF:000006">
    <property type="entry name" value="Elongation factor G"/>
    <property type="match status" value="1"/>
</dbReference>
<dbReference type="FunFam" id="3.30.230.10:FF:000003">
    <property type="entry name" value="Elongation factor G"/>
    <property type="match status" value="1"/>
</dbReference>
<dbReference type="FunFam" id="3.30.70.240:FF:000001">
    <property type="entry name" value="Elongation factor G"/>
    <property type="match status" value="1"/>
</dbReference>
<dbReference type="FunFam" id="3.30.70.870:FF:000001">
    <property type="entry name" value="Elongation factor G"/>
    <property type="match status" value="1"/>
</dbReference>
<dbReference type="FunFam" id="3.40.50.300:FF:000029">
    <property type="entry name" value="Elongation factor G"/>
    <property type="match status" value="1"/>
</dbReference>
<dbReference type="Gene3D" id="3.30.230.10">
    <property type="match status" value="1"/>
</dbReference>
<dbReference type="Gene3D" id="3.30.70.240">
    <property type="match status" value="1"/>
</dbReference>
<dbReference type="Gene3D" id="3.30.70.870">
    <property type="entry name" value="Elongation Factor G (Translational Gtpase), domain 3"/>
    <property type="match status" value="1"/>
</dbReference>
<dbReference type="Gene3D" id="3.40.50.300">
    <property type="entry name" value="P-loop containing nucleotide triphosphate hydrolases"/>
    <property type="match status" value="1"/>
</dbReference>
<dbReference type="Gene3D" id="2.40.30.10">
    <property type="entry name" value="Translation factors"/>
    <property type="match status" value="1"/>
</dbReference>
<dbReference type="HAMAP" id="MF_00054_B">
    <property type="entry name" value="EF_G_EF_2_B"/>
    <property type="match status" value="1"/>
</dbReference>
<dbReference type="InterPro" id="IPR053905">
    <property type="entry name" value="EF-G-like_DII"/>
</dbReference>
<dbReference type="InterPro" id="IPR041095">
    <property type="entry name" value="EFG_II"/>
</dbReference>
<dbReference type="InterPro" id="IPR009022">
    <property type="entry name" value="EFG_III"/>
</dbReference>
<dbReference type="InterPro" id="IPR035647">
    <property type="entry name" value="EFG_III/V"/>
</dbReference>
<dbReference type="InterPro" id="IPR047872">
    <property type="entry name" value="EFG_IV"/>
</dbReference>
<dbReference type="InterPro" id="IPR035649">
    <property type="entry name" value="EFG_V"/>
</dbReference>
<dbReference type="InterPro" id="IPR000640">
    <property type="entry name" value="EFG_V-like"/>
</dbReference>
<dbReference type="InterPro" id="IPR031157">
    <property type="entry name" value="G_TR_CS"/>
</dbReference>
<dbReference type="InterPro" id="IPR027417">
    <property type="entry name" value="P-loop_NTPase"/>
</dbReference>
<dbReference type="InterPro" id="IPR020568">
    <property type="entry name" value="Ribosomal_Su5_D2-typ_SF"/>
</dbReference>
<dbReference type="InterPro" id="IPR014721">
    <property type="entry name" value="Ribsml_uS5_D2-typ_fold_subgr"/>
</dbReference>
<dbReference type="InterPro" id="IPR005225">
    <property type="entry name" value="Small_GTP-bd"/>
</dbReference>
<dbReference type="InterPro" id="IPR000795">
    <property type="entry name" value="T_Tr_GTP-bd_dom"/>
</dbReference>
<dbReference type="InterPro" id="IPR009000">
    <property type="entry name" value="Transl_B-barrel_sf"/>
</dbReference>
<dbReference type="InterPro" id="IPR004540">
    <property type="entry name" value="Transl_elong_EFG/EF2"/>
</dbReference>
<dbReference type="InterPro" id="IPR005517">
    <property type="entry name" value="Transl_elong_EFG/EF2_IV"/>
</dbReference>
<dbReference type="NCBIfam" id="TIGR00484">
    <property type="entry name" value="EF-G"/>
    <property type="match status" value="1"/>
</dbReference>
<dbReference type="NCBIfam" id="NF009379">
    <property type="entry name" value="PRK12740.1-3"/>
    <property type="match status" value="1"/>
</dbReference>
<dbReference type="NCBIfam" id="NF009381">
    <property type="entry name" value="PRK12740.1-5"/>
    <property type="match status" value="1"/>
</dbReference>
<dbReference type="NCBIfam" id="TIGR00231">
    <property type="entry name" value="small_GTP"/>
    <property type="match status" value="1"/>
</dbReference>
<dbReference type="PANTHER" id="PTHR43261:SF1">
    <property type="entry name" value="RIBOSOME-RELEASING FACTOR 2, MITOCHONDRIAL"/>
    <property type="match status" value="1"/>
</dbReference>
<dbReference type="PANTHER" id="PTHR43261">
    <property type="entry name" value="TRANSLATION ELONGATION FACTOR G-RELATED"/>
    <property type="match status" value="1"/>
</dbReference>
<dbReference type="Pfam" id="PF22042">
    <property type="entry name" value="EF-G_D2"/>
    <property type="match status" value="1"/>
</dbReference>
<dbReference type="Pfam" id="PF00679">
    <property type="entry name" value="EFG_C"/>
    <property type="match status" value="1"/>
</dbReference>
<dbReference type="Pfam" id="PF14492">
    <property type="entry name" value="EFG_III"/>
    <property type="match status" value="1"/>
</dbReference>
<dbReference type="Pfam" id="PF03764">
    <property type="entry name" value="EFG_IV"/>
    <property type="match status" value="1"/>
</dbReference>
<dbReference type="Pfam" id="PF00009">
    <property type="entry name" value="GTP_EFTU"/>
    <property type="match status" value="1"/>
</dbReference>
<dbReference type="PRINTS" id="PR00315">
    <property type="entry name" value="ELONGATNFCT"/>
</dbReference>
<dbReference type="SMART" id="SM00838">
    <property type="entry name" value="EFG_C"/>
    <property type="match status" value="1"/>
</dbReference>
<dbReference type="SMART" id="SM00889">
    <property type="entry name" value="EFG_IV"/>
    <property type="match status" value="1"/>
</dbReference>
<dbReference type="SUPFAM" id="SSF54980">
    <property type="entry name" value="EF-G C-terminal domain-like"/>
    <property type="match status" value="2"/>
</dbReference>
<dbReference type="SUPFAM" id="SSF52540">
    <property type="entry name" value="P-loop containing nucleoside triphosphate hydrolases"/>
    <property type="match status" value="1"/>
</dbReference>
<dbReference type="SUPFAM" id="SSF54211">
    <property type="entry name" value="Ribosomal protein S5 domain 2-like"/>
    <property type="match status" value="1"/>
</dbReference>
<dbReference type="SUPFAM" id="SSF50447">
    <property type="entry name" value="Translation proteins"/>
    <property type="match status" value="1"/>
</dbReference>
<dbReference type="PROSITE" id="PS00301">
    <property type="entry name" value="G_TR_1"/>
    <property type="match status" value="1"/>
</dbReference>
<dbReference type="PROSITE" id="PS51722">
    <property type="entry name" value="G_TR_2"/>
    <property type="match status" value="1"/>
</dbReference>
<protein>
    <recommendedName>
        <fullName evidence="1">Elongation factor G</fullName>
        <shortName evidence="1">EF-G</shortName>
    </recommendedName>
</protein>
<organism>
    <name type="scientific">Campylobacter jejuni subsp. jejuni serotype O:23/36 (strain 81-176)</name>
    <dbReference type="NCBI Taxonomy" id="354242"/>
    <lineage>
        <taxon>Bacteria</taxon>
        <taxon>Pseudomonadati</taxon>
        <taxon>Campylobacterota</taxon>
        <taxon>Epsilonproteobacteria</taxon>
        <taxon>Campylobacterales</taxon>
        <taxon>Campylobacteraceae</taxon>
        <taxon>Campylobacter</taxon>
    </lineage>
</organism>